<keyword id="KW-0963">Cytoplasm</keyword>
<keyword id="KW-0489">Methyltransferase</keyword>
<keyword id="KW-0545">Nucleotide biosynthesis</keyword>
<keyword id="KW-0808">Transferase</keyword>
<reference key="1">
    <citation type="journal article" date="2006" name="Proc. Natl. Acad. Sci. U.S.A.">
        <title>Molecular genetic anatomy of inter- and intraserotype variation in the human bacterial pathogen group A Streptococcus.</title>
        <authorList>
            <person name="Beres S.B."/>
            <person name="Richter E.W."/>
            <person name="Nagiec M.J."/>
            <person name="Sumby P."/>
            <person name="Porcella S.F."/>
            <person name="DeLeo F.R."/>
            <person name="Musser J.M."/>
        </authorList>
    </citation>
    <scope>NUCLEOTIDE SEQUENCE [LARGE SCALE GENOMIC DNA]</scope>
    <source>
        <strain>MGAS9429</strain>
    </source>
</reference>
<dbReference type="EC" id="2.1.1.45" evidence="1"/>
<dbReference type="EMBL" id="CP000259">
    <property type="protein sequence ID" value="ABF31932.1"/>
    <property type="status" value="ALT_INIT"/>
    <property type="molecule type" value="Genomic_DNA"/>
</dbReference>
<dbReference type="RefSeq" id="WP_002990167.1">
    <property type="nucleotide sequence ID" value="NC_008021.1"/>
</dbReference>
<dbReference type="SMR" id="Q1JM80"/>
<dbReference type="KEGG" id="spk:MGAS9429_Spy0744"/>
<dbReference type="HOGENOM" id="CLU_021669_0_0_9"/>
<dbReference type="UniPathway" id="UPA00575"/>
<dbReference type="Proteomes" id="UP000002433">
    <property type="component" value="Chromosome"/>
</dbReference>
<dbReference type="GO" id="GO:0005829">
    <property type="term" value="C:cytosol"/>
    <property type="evidence" value="ECO:0007669"/>
    <property type="project" value="TreeGrafter"/>
</dbReference>
<dbReference type="GO" id="GO:0004799">
    <property type="term" value="F:thymidylate synthase activity"/>
    <property type="evidence" value="ECO:0007669"/>
    <property type="project" value="UniProtKB-UniRule"/>
</dbReference>
<dbReference type="GO" id="GO:0006231">
    <property type="term" value="P:dTMP biosynthetic process"/>
    <property type="evidence" value="ECO:0007669"/>
    <property type="project" value="UniProtKB-UniRule"/>
</dbReference>
<dbReference type="GO" id="GO:0006235">
    <property type="term" value="P:dTTP biosynthetic process"/>
    <property type="evidence" value="ECO:0007669"/>
    <property type="project" value="UniProtKB-UniRule"/>
</dbReference>
<dbReference type="GO" id="GO:0032259">
    <property type="term" value="P:methylation"/>
    <property type="evidence" value="ECO:0007669"/>
    <property type="project" value="UniProtKB-KW"/>
</dbReference>
<dbReference type="CDD" id="cd00351">
    <property type="entry name" value="TS_Pyrimidine_HMase"/>
    <property type="match status" value="1"/>
</dbReference>
<dbReference type="Gene3D" id="3.30.572.10">
    <property type="entry name" value="Thymidylate synthase/dCMP hydroxymethylase domain"/>
    <property type="match status" value="1"/>
</dbReference>
<dbReference type="HAMAP" id="MF_00008">
    <property type="entry name" value="Thymidy_synth_bact"/>
    <property type="match status" value="1"/>
</dbReference>
<dbReference type="InterPro" id="IPR045097">
    <property type="entry name" value="Thymidate_synth/dCMP_Mease"/>
</dbReference>
<dbReference type="InterPro" id="IPR023451">
    <property type="entry name" value="Thymidate_synth/dCMP_Mease_dom"/>
</dbReference>
<dbReference type="InterPro" id="IPR036926">
    <property type="entry name" value="Thymidate_synth/dCMP_Mease_sf"/>
</dbReference>
<dbReference type="InterPro" id="IPR000398">
    <property type="entry name" value="Thymidylate_synthase"/>
</dbReference>
<dbReference type="InterPro" id="IPR020940">
    <property type="entry name" value="Thymidylate_synthase_AS"/>
</dbReference>
<dbReference type="NCBIfam" id="NF002495">
    <property type="entry name" value="PRK01827.1-1"/>
    <property type="match status" value="1"/>
</dbReference>
<dbReference type="PANTHER" id="PTHR11548">
    <property type="entry name" value="THYMIDYLATE SYNTHASE 1"/>
    <property type="match status" value="1"/>
</dbReference>
<dbReference type="PANTHER" id="PTHR11548:SF1">
    <property type="entry name" value="THYMIDYLATE SYNTHASE 1"/>
    <property type="match status" value="1"/>
</dbReference>
<dbReference type="Pfam" id="PF00303">
    <property type="entry name" value="Thymidylat_synt"/>
    <property type="match status" value="1"/>
</dbReference>
<dbReference type="PRINTS" id="PR00108">
    <property type="entry name" value="THYMDSNTHASE"/>
</dbReference>
<dbReference type="SUPFAM" id="SSF55831">
    <property type="entry name" value="Thymidylate synthase/dCMP hydroxymethylase"/>
    <property type="match status" value="1"/>
</dbReference>
<dbReference type="PROSITE" id="PS00091">
    <property type="entry name" value="THYMIDYLATE_SYNTHASE"/>
    <property type="match status" value="1"/>
</dbReference>
<protein>
    <recommendedName>
        <fullName evidence="1">Thymidylate synthase</fullName>
        <shortName evidence="1">TS</shortName>
        <shortName evidence="1">TSase</shortName>
        <ecNumber evidence="1">2.1.1.45</ecNumber>
    </recommendedName>
</protein>
<accession>Q1JM80</accession>
<organism>
    <name type="scientific">Streptococcus pyogenes serotype M12 (strain MGAS9429)</name>
    <dbReference type="NCBI Taxonomy" id="370551"/>
    <lineage>
        <taxon>Bacteria</taxon>
        <taxon>Bacillati</taxon>
        <taxon>Bacillota</taxon>
        <taxon>Bacilli</taxon>
        <taxon>Lactobacillales</taxon>
        <taxon>Streptococcaceae</taxon>
        <taxon>Streptococcus</taxon>
    </lineage>
</organism>
<proteinExistence type="inferred from homology"/>
<feature type="chain" id="PRO_0000321486" description="Thymidylate synthase">
    <location>
        <begin position="1"/>
        <end position="279"/>
    </location>
</feature>
<feature type="active site" description="Nucleophile" evidence="1">
    <location>
        <position position="154"/>
    </location>
</feature>
<feature type="binding site" evidence="1">
    <location>
        <begin position="133"/>
        <end position="134"/>
    </location>
    <ligand>
        <name>dUMP</name>
        <dbReference type="ChEBI" id="CHEBI:246422"/>
        <note>ligand shared between dimeric partners</note>
    </ligand>
</feature>
<feature type="binding site" description="in other chain" evidence="1">
    <location>
        <begin position="178"/>
        <end position="181"/>
    </location>
    <ligand>
        <name>dUMP</name>
        <dbReference type="ChEBI" id="CHEBI:246422"/>
        <note>ligand shared between dimeric partners</note>
    </ligand>
</feature>
<feature type="binding site" evidence="1">
    <location>
        <position position="181"/>
    </location>
    <ligand>
        <name>(6R)-5,10-methylene-5,6,7,8-tetrahydrofolate</name>
        <dbReference type="ChEBI" id="CHEBI:15636"/>
    </ligand>
</feature>
<feature type="binding site" description="in other chain" evidence="1">
    <location>
        <position position="189"/>
    </location>
    <ligand>
        <name>dUMP</name>
        <dbReference type="ChEBI" id="CHEBI:246422"/>
        <note>ligand shared between dimeric partners</note>
    </ligand>
</feature>
<feature type="binding site" description="in other chain" evidence="1">
    <location>
        <begin position="219"/>
        <end position="221"/>
    </location>
    <ligand>
        <name>dUMP</name>
        <dbReference type="ChEBI" id="CHEBI:246422"/>
        <note>ligand shared between dimeric partners</note>
    </ligand>
</feature>
<feature type="binding site" evidence="1">
    <location>
        <position position="278"/>
    </location>
    <ligand>
        <name>(6R)-5,10-methylene-5,6,7,8-tetrahydrofolate</name>
        <dbReference type="ChEBI" id="CHEBI:15636"/>
    </ligand>
</feature>
<gene>
    <name evidence="1" type="primary">thyA</name>
    <name type="ordered locus">MGAS9429_Spy0744</name>
</gene>
<evidence type="ECO:0000255" key="1">
    <source>
        <dbReference type="HAMAP-Rule" id="MF_00008"/>
    </source>
</evidence>
<evidence type="ECO:0000305" key="2"/>
<name>TYSY_STRPC</name>
<sequence>MTKADQIFKANIQKIINEGSLSEQARPKYKDGRTAHSKYITGAFAEYDLAKGEFPITTLRPIPIKSAIKELFWIYQDQSNSLDVLEAKYNVHYWNEWEVDQTRTIGQRYGAVVKKHDIISKILKQLAENPWNRRNVISLWDYEAFEETKGLLPCAFQIMFDVRRVGEDLYLDASLTQRSNDILVAHHINAMQYVALQMMFAKHFGWKIGKFFYFVNNLHIYDNQFDQAQELLKRQPVASQPKLVLNVPDGTNFFDIKPDDFELQNYDPVKPQLHFDLAI</sequence>
<comment type="function">
    <text evidence="1">Catalyzes the reductive methylation of 2'-deoxyuridine-5'-monophosphate (dUMP) to 2'-deoxythymidine-5'-monophosphate (dTMP) while utilizing 5,10-methylenetetrahydrofolate (mTHF) as the methyl donor and reductant in the reaction, yielding dihydrofolate (DHF) as a by-product. This enzymatic reaction provides an intracellular de novo source of dTMP, an essential precursor for DNA biosynthesis.</text>
</comment>
<comment type="catalytic activity">
    <reaction evidence="1">
        <text>dUMP + (6R)-5,10-methylene-5,6,7,8-tetrahydrofolate = 7,8-dihydrofolate + dTMP</text>
        <dbReference type="Rhea" id="RHEA:12104"/>
        <dbReference type="ChEBI" id="CHEBI:15636"/>
        <dbReference type="ChEBI" id="CHEBI:57451"/>
        <dbReference type="ChEBI" id="CHEBI:63528"/>
        <dbReference type="ChEBI" id="CHEBI:246422"/>
        <dbReference type="EC" id="2.1.1.45"/>
    </reaction>
</comment>
<comment type="pathway">
    <text evidence="1">Pyrimidine metabolism; dTTP biosynthesis.</text>
</comment>
<comment type="subunit">
    <text evidence="1">Homodimer.</text>
</comment>
<comment type="subcellular location">
    <subcellularLocation>
        <location evidence="1">Cytoplasm</location>
    </subcellularLocation>
</comment>
<comment type="similarity">
    <text evidence="1">Belongs to the thymidylate synthase family. Bacterial-type ThyA subfamily.</text>
</comment>
<comment type="sequence caution" evidence="2">
    <conflict type="erroneous initiation">
        <sequence resource="EMBL-CDS" id="ABF31932"/>
    </conflict>
</comment>